<proteinExistence type="inferred from homology"/>
<sequence>MNHTHETIIAGRPMKVEFGKLGMLSDAAILMSYGDTVILTNVNASEKPREGIDFFPLSVEYEERLYSVGKIPGGFIKREGKPSEKAILNGRAIDRPLRPLFPKGYRNDVQVVCTVVSVENDNLPEILAINAASMALCLSSIPFTTPVAAVQVGLIGEEFILNPTSKEREESSLQLTVCATKERVMMIEAGGDEIPEDTMINAIKFGFDKCQDIIKFQEEAVSMFGKEKKVPELHKVPEEIEEAVREFAFDMISESMHITDRDERNAAMDEVKAKINEEFEEKYPDNMSDIGEAVYDMQKEVVRHMLLKEGKRPDGRAFDQVRNIGCEVGLLPRTHGTGLFTRGLTQVMTVATLGSISEIQILDGIGEEESKRYMHHYNFPAYSVGEVRPLRGPGRREIGHGALAERALEPLIPSEAEFPYTIRLVSEVLSSNGSTSQASVCGSTLALLDAGVPIKRPAAGIAMGLITSKDLTEEEVLTDIQGLEDFFGDMDFKVAGTEEGITSIQVDTKIKGLSEKVIHDAIYGARKARLMILDKIKECIPAPREEVSKYAPKTSTLQIDPEKIRDVIGAGGKVINKIIADTGVKIDIKEDGLVYVSSAESEGVKEAVKIIEGLTKEVKAGEIYLGKVTKIAQFGAFVEVLPNKEGLVHISKLDNKRVEKVEDVVSVGDEILVKVTEIDSQGRINLSRKDAIKEAEEENKQQ</sequence>
<name>PNP_CLOPE</name>
<protein>
    <recommendedName>
        <fullName evidence="1">Polyribonucleotide nucleotidyltransferase</fullName>
        <ecNumber evidence="1">2.7.7.8</ecNumber>
    </recommendedName>
    <alternativeName>
        <fullName evidence="1">Polynucleotide phosphorylase</fullName>
        <shortName evidence="1">PNPase</shortName>
    </alternativeName>
</protein>
<organism>
    <name type="scientific">Clostridium perfringens (strain 13 / Type A)</name>
    <dbReference type="NCBI Taxonomy" id="195102"/>
    <lineage>
        <taxon>Bacteria</taxon>
        <taxon>Bacillati</taxon>
        <taxon>Bacillota</taxon>
        <taxon>Clostridia</taxon>
        <taxon>Eubacteriales</taxon>
        <taxon>Clostridiaceae</taxon>
        <taxon>Clostridium</taxon>
    </lineage>
</organism>
<dbReference type="EC" id="2.7.7.8" evidence="1"/>
<dbReference type="EMBL" id="BA000016">
    <property type="protein sequence ID" value="BAB81386.1"/>
    <property type="molecule type" value="Genomic_DNA"/>
</dbReference>
<dbReference type="RefSeq" id="WP_003469153.1">
    <property type="nucleotide sequence ID" value="NC_003366.1"/>
</dbReference>
<dbReference type="SMR" id="Q8XJS4"/>
<dbReference type="STRING" id="195102.gene:10490944"/>
<dbReference type="KEGG" id="cpe:CPE1680"/>
<dbReference type="HOGENOM" id="CLU_004217_2_2_9"/>
<dbReference type="Proteomes" id="UP000000818">
    <property type="component" value="Chromosome"/>
</dbReference>
<dbReference type="GO" id="GO:0005829">
    <property type="term" value="C:cytosol"/>
    <property type="evidence" value="ECO:0007669"/>
    <property type="project" value="TreeGrafter"/>
</dbReference>
<dbReference type="GO" id="GO:0000175">
    <property type="term" value="F:3'-5'-RNA exonuclease activity"/>
    <property type="evidence" value="ECO:0007669"/>
    <property type="project" value="TreeGrafter"/>
</dbReference>
<dbReference type="GO" id="GO:0000287">
    <property type="term" value="F:magnesium ion binding"/>
    <property type="evidence" value="ECO:0007669"/>
    <property type="project" value="UniProtKB-UniRule"/>
</dbReference>
<dbReference type="GO" id="GO:0004654">
    <property type="term" value="F:polyribonucleotide nucleotidyltransferase activity"/>
    <property type="evidence" value="ECO:0007669"/>
    <property type="project" value="UniProtKB-UniRule"/>
</dbReference>
<dbReference type="GO" id="GO:0003723">
    <property type="term" value="F:RNA binding"/>
    <property type="evidence" value="ECO:0007669"/>
    <property type="project" value="UniProtKB-UniRule"/>
</dbReference>
<dbReference type="GO" id="GO:0006402">
    <property type="term" value="P:mRNA catabolic process"/>
    <property type="evidence" value="ECO:0007669"/>
    <property type="project" value="UniProtKB-UniRule"/>
</dbReference>
<dbReference type="GO" id="GO:0006396">
    <property type="term" value="P:RNA processing"/>
    <property type="evidence" value="ECO:0007669"/>
    <property type="project" value="InterPro"/>
</dbReference>
<dbReference type="CDD" id="cd02393">
    <property type="entry name" value="KH-I_PNPase"/>
    <property type="match status" value="1"/>
</dbReference>
<dbReference type="CDD" id="cd11363">
    <property type="entry name" value="RNase_PH_PNPase_1"/>
    <property type="match status" value="1"/>
</dbReference>
<dbReference type="CDD" id="cd11364">
    <property type="entry name" value="RNase_PH_PNPase_2"/>
    <property type="match status" value="1"/>
</dbReference>
<dbReference type="CDD" id="cd04472">
    <property type="entry name" value="S1_PNPase"/>
    <property type="match status" value="1"/>
</dbReference>
<dbReference type="FunFam" id="2.40.50.140:FF:000023">
    <property type="entry name" value="Polyribonucleotide nucleotidyltransferase"/>
    <property type="match status" value="1"/>
</dbReference>
<dbReference type="FunFam" id="3.30.1370.10:FF:000001">
    <property type="entry name" value="Polyribonucleotide nucleotidyltransferase"/>
    <property type="match status" value="1"/>
</dbReference>
<dbReference type="FunFam" id="3.30.230.70:FF:000001">
    <property type="entry name" value="Polyribonucleotide nucleotidyltransferase"/>
    <property type="match status" value="1"/>
</dbReference>
<dbReference type="FunFam" id="3.30.230.70:FF:000002">
    <property type="entry name" value="Polyribonucleotide nucleotidyltransferase"/>
    <property type="match status" value="1"/>
</dbReference>
<dbReference type="Gene3D" id="3.30.230.70">
    <property type="entry name" value="GHMP Kinase, N-terminal domain"/>
    <property type="match status" value="2"/>
</dbReference>
<dbReference type="Gene3D" id="3.30.1370.10">
    <property type="entry name" value="K Homology domain, type 1"/>
    <property type="match status" value="1"/>
</dbReference>
<dbReference type="Gene3D" id="2.40.50.140">
    <property type="entry name" value="Nucleic acid-binding proteins"/>
    <property type="match status" value="1"/>
</dbReference>
<dbReference type="HAMAP" id="MF_01595">
    <property type="entry name" value="PNPase"/>
    <property type="match status" value="1"/>
</dbReference>
<dbReference type="InterPro" id="IPR001247">
    <property type="entry name" value="ExoRNase_PH_dom1"/>
</dbReference>
<dbReference type="InterPro" id="IPR015847">
    <property type="entry name" value="ExoRNase_PH_dom2"/>
</dbReference>
<dbReference type="InterPro" id="IPR036345">
    <property type="entry name" value="ExoRNase_PH_dom2_sf"/>
</dbReference>
<dbReference type="InterPro" id="IPR004087">
    <property type="entry name" value="KH_dom"/>
</dbReference>
<dbReference type="InterPro" id="IPR004088">
    <property type="entry name" value="KH_dom_type_1"/>
</dbReference>
<dbReference type="InterPro" id="IPR036612">
    <property type="entry name" value="KH_dom_type_1_sf"/>
</dbReference>
<dbReference type="InterPro" id="IPR012340">
    <property type="entry name" value="NA-bd_OB-fold"/>
</dbReference>
<dbReference type="InterPro" id="IPR012162">
    <property type="entry name" value="PNPase"/>
</dbReference>
<dbReference type="InterPro" id="IPR027408">
    <property type="entry name" value="PNPase/RNase_PH_dom_sf"/>
</dbReference>
<dbReference type="InterPro" id="IPR015848">
    <property type="entry name" value="PNPase_PH_RNA-bd_bac/org-type"/>
</dbReference>
<dbReference type="InterPro" id="IPR020568">
    <property type="entry name" value="Ribosomal_Su5_D2-typ_SF"/>
</dbReference>
<dbReference type="InterPro" id="IPR003029">
    <property type="entry name" value="S1_domain"/>
</dbReference>
<dbReference type="NCBIfam" id="TIGR03591">
    <property type="entry name" value="polynuc_phos"/>
    <property type="match status" value="1"/>
</dbReference>
<dbReference type="NCBIfam" id="NF008805">
    <property type="entry name" value="PRK11824.1"/>
    <property type="match status" value="1"/>
</dbReference>
<dbReference type="PANTHER" id="PTHR11252">
    <property type="entry name" value="POLYRIBONUCLEOTIDE NUCLEOTIDYLTRANSFERASE"/>
    <property type="match status" value="1"/>
</dbReference>
<dbReference type="PANTHER" id="PTHR11252:SF0">
    <property type="entry name" value="POLYRIBONUCLEOTIDE NUCLEOTIDYLTRANSFERASE 1, MITOCHONDRIAL"/>
    <property type="match status" value="1"/>
</dbReference>
<dbReference type="Pfam" id="PF00013">
    <property type="entry name" value="KH_1"/>
    <property type="match status" value="1"/>
</dbReference>
<dbReference type="Pfam" id="PF03726">
    <property type="entry name" value="PNPase"/>
    <property type="match status" value="1"/>
</dbReference>
<dbReference type="Pfam" id="PF01138">
    <property type="entry name" value="RNase_PH"/>
    <property type="match status" value="2"/>
</dbReference>
<dbReference type="Pfam" id="PF03725">
    <property type="entry name" value="RNase_PH_C"/>
    <property type="match status" value="1"/>
</dbReference>
<dbReference type="Pfam" id="PF00575">
    <property type="entry name" value="S1"/>
    <property type="match status" value="1"/>
</dbReference>
<dbReference type="PIRSF" id="PIRSF005499">
    <property type="entry name" value="PNPase"/>
    <property type="match status" value="1"/>
</dbReference>
<dbReference type="SMART" id="SM00322">
    <property type="entry name" value="KH"/>
    <property type="match status" value="1"/>
</dbReference>
<dbReference type="SMART" id="SM00316">
    <property type="entry name" value="S1"/>
    <property type="match status" value="1"/>
</dbReference>
<dbReference type="SUPFAM" id="SSF54791">
    <property type="entry name" value="Eukaryotic type KH-domain (KH-domain type I)"/>
    <property type="match status" value="1"/>
</dbReference>
<dbReference type="SUPFAM" id="SSF50249">
    <property type="entry name" value="Nucleic acid-binding proteins"/>
    <property type="match status" value="1"/>
</dbReference>
<dbReference type="SUPFAM" id="SSF55666">
    <property type="entry name" value="Ribonuclease PH domain 2-like"/>
    <property type="match status" value="2"/>
</dbReference>
<dbReference type="SUPFAM" id="SSF54211">
    <property type="entry name" value="Ribosomal protein S5 domain 2-like"/>
    <property type="match status" value="2"/>
</dbReference>
<dbReference type="PROSITE" id="PS50084">
    <property type="entry name" value="KH_TYPE_1"/>
    <property type="match status" value="1"/>
</dbReference>
<dbReference type="PROSITE" id="PS50126">
    <property type="entry name" value="S1"/>
    <property type="match status" value="1"/>
</dbReference>
<gene>
    <name evidence="1" type="primary">pnp</name>
    <name type="ordered locus">CPE1680</name>
</gene>
<comment type="function">
    <text evidence="1">Involved in mRNA degradation. Catalyzes the phosphorolysis of single-stranded polyribonucleotides processively in the 3'- to 5'-direction.</text>
</comment>
<comment type="catalytic activity">
    <reaction evidence="1">
        <text>RNA(n+1) + phosphate = RNA(n) + a ribonucleoside 5'-diphosphate</text>
        <dbReference type="Rhea" id="RHEA:22096"/>
        <dbReference type="Rhea" id="RHEA-COMP:14527"/>
        <dbReference type="Rhea" id="RHEA-COMP:17342"/>
        <dbReference type="ChEBI" id="CHEBI:43474"/>
        <dbReference type="ChEBI" id="CHEBI:57930"/>
        <dbReference type="ChEBI" id="CHEBI:140395"/>
        <dbReference type="EC" id="2.7.7.8"/>
    </reaction>
</comment>
<comment type="cofactor">
    <cofactor evidence="1">
        <name>Mg(2+)</name>
        <dbReference type="ChEBI" id="CHEBI:18420"/>
    </cofactor>
</comment>
<comment type="subcellular location">
    <subcellularLocation>
        <location evidence="1">Cytoplasm</location>
    </subcellularLocation>
</comment>
<comment type="similarity">
    <text evidence="1">Belongs to the polyribonucleotide nucleotidyltransferase family.</text>
</comment>
<evidence type="ECO:0000255" key="1">
    <source>
        <dbReference type="HAMAP-Rule" id="MF_01595"/>
    </source>
</evidence>
<feature type="chain" id="PRO_0000329600" description="Polyribonucleotide nucleotidyltransferase">
    <location>
        <begin position="1"/>
        <end position="702"/>
    </location>
</feature>
<feature type="domain" description="KH" evidence="1">
    <location>
        <begin position="552"/>
        <end position="611"/>
    </location>
</feature>
<feature type="domain" description="S1 motif" evidence="1">
    <location>
        <begin position="621"/>
        <end position="689"/>
    </location>
</feature>
<feature type="binding site" evidence="1">
    <location>
        <position position="485"/>
    </location>
    <ligand>
        <name>Mg(2+)</name>
        <dbReference type="ChEBI" id="CHEBI:18420"/>
    </ligand>
</feature>
<feature type="binding site" evidence="1">
    <location>
        <position position="491"/>
    </location>
    <ligand>
        <name>Mg(2+)</name>
        <dbReference type="ChEBI" id="CHEBI:18420"/>
    </ligand>
</feature>
<reference key="1">
    <citation type="journal article" date="2002" name="Proc. Natl. Acad. Sci. U.S.A.">
        <title>Complete genome sequence of Clostridium perfringens, an anaerobic flesh-eater.</title>
        <authorList>
            <person name="Shimizu T."/>
            <person name="Ohtani K."/>
            <person name="Hirakawa H."/>
            <person name="Ohshima K."/>
            <person name="Yamashita A."/>
            <person name="Shiba T."/>
            <person name="Ogasawara N."/>
            <person name="Hattori M."/>
            <person name="Kuhara S."/>
            <person name="Hayashi H."/>
        </authorList>
    </citation>
    <scope>NUCLEOTIDE SEQUENCE [LARGE SCALE GENOMIC DNA]</scope>
    <source>
        <strain>13 / Type A</strain>
    </source>
</reference>
<keyword id="KW-0963">Cytoplasm</keyword>
<keyword id="KW-0460">Magnesium</keyword>
<keyword id="KW-0479">Metal-binding</keyword>
<keyword id="KW-0548">Nucleotidyltransferase</keyword>
<keyword id="KW-1185">Reference proteome</keyword>
<keyword id="KW-0694">RNA-binding</keyword>
<keyword id="KW-0808">Transferase</keyword>
<accession>Q8XJS4</accession>